<gene>
    <name type="primary">Mettl22</name>
</gene>
<accession>Q8R1C6</accession>
<accession>Q3UW48</accession>
<keyword id="KW-0489">Methyltransferase</keyword>
<keyword id="KW-0539">Nucleus</keyword>
<keyword id="KW-0597">Phosphoprotein</keyword>
<keyword id="KW-1185">Reference proteome</keyword>
<keyword id="KW-0949">S-adenosyl-L-methionine</keyword>
<keyword id="KW-0808">Transferase</keyword>
<evidence type="ECO:0000250" key="1"/>
<evidence type="ECO:0000250" key="2">
    <source>
        <dbReference type="UniProtKB" id="Q9BUU2"/>
    </source>
</evidence>
<evidence type="ECO:0000256" key="3">
    <source>
        <dbReference type="SAM" id="MobiDB-lite"/>
    </source>
</evidence>
<evidence type="ECO:0000305" key="4"/>
<organism>
    <name type="scientific">Mus musculus</name>
    <name type="common">Mouse</name>
    <dbReference type="NCBI Taxonomy" id="10090"/>
    <lineage>
        <taxon>Eukaryota</taxon>
        <taxon>Metazoa</taxon>
        <taxon>Chordata</taxon>
        <taxon>Craniata</taxon>
        <taxon>Vertebrata</taxon>
        <taxon>Euteleostomi</taxon>
        <taxon>Mammalia</taxon>
        <taxon>Eutheria</taxon>
        <taxon>Euarchontoglires</taxon>
        <taxon>Glires</taxon>
        <taxon>Rodentia</taxon>
        <taxon>Myomorpha</taxon>
        <taxon>Muroidea</taxon>
        <taxon>Muridae</taxon>
        <taxon>Murinae</taxon>
        <taxon>Mus</taxon>
        <taxon>Mus</taxon>
    </lineage>
</organism>
<protein>
    <recommendedName>
        <fullName>Methyltransferase-like protein 22</fullName>
        <ecNumber evidence="2">2.1.1.-</ecNumber>
    </recommendedName>
</protein>
<name>MET22_MOUSE</name>
<reference key="1">
    <citation type="journal article" date="2005" name="Science">
        <title>The transcriptional landscape of the mammalian genome.</title>
        <authorList>
            <person name="Carninci P."/>
            <person name="Kasukawa T."/>
            <person name="Katayama S."/>
            <person name="Gough J."/>
            <person name="Frith M.C."/>
            <person name="Maeda N."/>
            <person name="Oyama R."/>
            <person name="Ravasi T."/>
            <person name="Lenhard B."/>
            <person name="Wells C."/>
            <person name="Kodzius R."/>
            <person name="Shimokawa K."/>
            <person name="Bajic V.B."/>
            <person name="Brenner S.E."/>
            <person name="Batalov S."/>
            <person name="Forrest A.R."/>
            <person name="Zavolan M."/>
            <person name="Davis M.J."/>
            <person name="Wilming L.G."/>
            <person name="Aidinis V."/>
            <person name="Allen J.E."/>
            <person name="Ambesi-Impiombato A."/>
            <person name="Apweiler R."/>
            <person name="Aturaliya R.N."/>
            <person name="Bailey T.L."/>
            <person name="Bansal M."/>
            <person name="Baxter L."/>
            <person name="Beisel K.W."/>
            <person name="Bersano T."/>
            <person name="Bono H."/>
            <person name="Chalk A.M."/>
            <person name="Chiu K.P."/>
            <person name="Choudhary V."/>
            <person name="Christoffels A."/>
            <person name="Clutterbuck D.R."/>
            <person name="Crowe M.L."/>
            <person name="Dalla E."/>
            <person name="Dalrymple B.P."/>
            <person name="de Bono B."/>
            <person name="Della Gatta G."/>
            <person name="di Bernardo D."/>
            <person name="Down T."/>
            <person name="Engstrom P."/>
            <person name="Fagiolini M."/>
            <person name="Faulkner G."/>
            <person name="Fletcher C.F."/>
            <person name="Fukushima T."/>
            <person name="Furuno M."/>
            <person name="Futaki S."/>
            <person name="Gariboldi M."/>
            <person name="Georgii-Hemming P."/>
            <person name="Gingeras T.R."/>
            <person name="Gojobori T."/>
            <person name="Green R.E."/>
            <person name="Gustincich S."/>
            <person name="Harbers M."/>
            <person name="Hayashi Y."/>
            <person name="Hensch T.K."/>
            <person name="Hirokawa N."/>
            <person name="Hill D."/>
            <person name="Huminiecki L."/>
            <person name="Iacono M."/>
            <person name="Ikeo K."/>
            <person name="Iwama A."/>
            <person name="Ishikawa T."/>
            <person name="Jakt M."/>
            <person name="Kanapin A."/>
            <person name="Katoh M."/>
            <person name="Kawasawa Y."/>
            <person name="Kelso J."/>
            <person name="Kitamura H."/>
            <person name="Kitano H."/>
            <person name="Kollias G."/>
            <person name="Krishnan S.P."/>
            <person name="Kruger A."/>
            <person name="Kummerfeld S.K."/>
            <person name="Kurochkin I.V."/>
            <person name="Lareau L.F."/>
            <person name="Lazarevic D."/>
            <person name="Lipovich L."/>
            <person name="Liu J."/>
            <person name="Liuni S."/>
            <person name="McWilliam S."/>
            <person name="Madan Babu M."/>
            <person name="Madera M."/>
            <person name="Marchionni L."/>
            <person name="Matsuda H."/>
            <person name="Matsuzawa S."/>
            <person name="Miki H."/>
            <person name="Mignone F."/>
            <person name="Miyake S."/>
            <person name="Morris K."/>
            <person name="Mottagui-Tabar S."/>
            <person name="Mulder N."/>
            <person name="Nakano N."/>
            <person name="Nakauchi H."/>
            <person name="Ng P."/>
            <person name="Nilsson R."/>
            <person name="Nishiguchi S."/>
            <person name="Nishikawa S."/>
            <person name="Nori F."/>
            <person name="Ohara O."/>
            <person name="Okazaki Y."/>
            <person name="Orlando V."/>
            <person name="Pang K.C."/>
            <person name="Pavan W.J."/>
            <person name="Pavesi G."/>
            <person name="Pesole G."/>
            <person name="Petrovsky N."/>
            <person name="Piazza S."/>
            <person name="Reed J."/>
            <person name="Reid J.F."/>
            <person name="Ring B.Z."/>
            <person name="Ringwald M."/>
            <person name="Rost B."/>
            <person name="Ruan Y."/>
            <person name="Salzberg S.L."/>
            <person name="Sandelin A."/>
            <person name="Schneider C."/>
            <person name="Schoenbach C."/>
            <person name="Sekiguchi K."/>
            <person name="Semple C.A."/>
            <person name="Seno S."/>
            <person name="Sessa L."/>
            <person name="Sheng Y."/>
            <person name="Shibata Y."/>
            <person name="Shimada H."/>
            <person name="Shimada K."/>
            <person name="Silva D."/>
            <person name="Sinclair B."/>
            <person name="Sperling S."/>
            <person name="Stupka E."/>
            <person name="Sugiura K."/>
            <person name="Sultana R."/>
            <person name="Takenaka Y."/>
            <person name="Taki K."/>
            <person name="Tammoja K."/>
            <person name="Tan S.L."/>
            <person name="Tang S."/>
            <person name="Taylor M.S."/>
            <person name="Tegner J."/>
            <person name="Teichmann S.A."/>
            <person name="Ueda H.R."/>
            <person name="van Nimwegen E."/>
            <person name="Verardo R."/>
            <person name="Wei C.L."/>
            <person name="Yagi K."/>
            <person name="Yamanishi H."/>
            <person name="Zabarovsky E."/>
            <person name="Zhu S."/>
            <person name="Zimmer A."/>
            <person name="Hide W."/>
            <person name="Bult C."/>
            <person name="Grimmond S.M."/>
            <person name="Teasdale R.D."/>
            <person name="Liu E.T."/>
            <person name="Brusic V."/>
            <person name="Quackenbush J."/>
            <person name="Wahlestedt C."/>
            <person name="Mattick J.S."/>
            <person name="Hume D.A."/>
            <person name="Kai C."/>
            <person name="Sasaki D."/>
            <person name="Tomaru Y."/>
            <person name="Fukuda S."/>
            <person name="Kanamori-Katayama M."/>
            <person name="Suzuki M."/>
            <person name="Aoki J."/>
            <person name="Arakawa T."/>
            <person name="Iida J."/>
            <person name="Imamura K."/>
            <person name="Itoh M."/>
            <person name="Kato T."/>
            <person name="Kawaji H."/>
            <person name="Kawagashira N."/>
            <person name="Kawashima T."/>
            <person name="Kojima M."/>
            <person name="Kondo S."/>
            <person name="Konno H."/>
            <person name="Nakano K."/>
            <person name="Ninomiya N."/>
            <person name="Nishio T."/>
            <person name="Okada M."/>
            <person name="Plessy C."/>
            <person name="Shibata K."/>
            <person name="Shiraki T."/>
            <person name="Suzuki S."/>
            <person name="Tagami M."/>
            <person name="Waki K."/>
            <person name="Watahiki A."/>
            <person name="Okamura-Oho Y."/>
            <person name="Suzuki H."/>
            <person name="Kawai J."/>
            <person name="Hayashizaki Y."/>
        </authorList>
    </citation>
    <scope>NUCLEOTIDE SEQUENCE [LARGE SCALE MRNA]</scope>
    <source>
        <strain>C57BL/6J</strain>
        <tissue>Epididymis</tissue>
    </source>
</reference>
<reference key="2">
    <citation type="journal article" date="2004" name="Genome Res.">
        <title>The status, quality, and expansion of the NIH full-length cDNA project: the Mammalian Gene Collection (MGC).</title>
        <authorList>
            <consortium name="The MGC Project Team"/>
        </authorList>
    </citation>
    <scope>NUCLEOTIDE SEQUENCE [LARGE SCALE MRNA]</scope>
    <source>
        <tissue>Eye</tissue>
    </source>
</reference>
<proteinExistence type="evidence at transcript level"/>
<comment type="function">
    <text evidence="2">Protein N-lysine methyltransferase. Trimethylates KIN at Lys-135 (in vitro).</text>
</comment>
<comment type="catalytic activity">
    <reaction evidence="2">
        <text>L-lysyl-[protein] + 3 S-adenosyl-L-methionine = N(6),N(6),N(6)-trimethyl-L-lysyl-[protein] + 3 S-adenosyl-L-homocysteine + 3 H(+)</text>
        <dbReference type="Rhea" id="RHEA:54192"/>
        <dbReference type="Rhea" id="RHEA-COMP:9752"/>
        <dbReference type="Rhea" id="RHEA-COMP:13826"/>
        <dbReference type="ChEBI" id="CHEBI:15378"/>
        <dbReference type="ChEBI" id="CHEBI:29969"/>
        <dbReference type="ChEBI" id="CHEBI:57856"/>
        <dbReference type="ChEBI" id="CHEBI:59789"/>
        <dbReference type="ChEBI" id="CHEBI:61961"/>
    </reaction>
    <physiologicalReaction direction="left-to-right" evidence="2">
        <dbReference type="Rhea" id="RHEA:54193"/>
    </physiologicalReaction>
</comment>
<comment type="subunit">
    <text evidence="1">Interacts with members of the heat shock protein 90 and 70 families; these proteins probably are methylation substrates.</text>
</comment>
<comment type="subcellular location">
    <subcellularLocation>
        <location evidence="1">Nucleus</location>
    </subcellularLocation>
</comment>
<comment type="similarity">
    <text evidence="4">Belongs to the methyltransferase superfamily. METTL22 family.</text>
</comment>
<comment type="sequence caution" evidence="4">
    <conflict type="frameshift">
        <sequence resource="EMBL-CDS" id="BAE23071"/>
    </conflict>
</comment>
<feature type="chain" id="PRO_0000286592" description="Methyltransferase-like protein 22">
    <location>
        <begin position="1"/>
        <end position="393"/>
    </location>
</feature>
<feature type="region of interest" description="Disordered" evidence="3">
    <location>
        <begin position="54"/>
        <end position="87"/>
    </location>
</feature>
<feature type="modified residue" description="Phosphoserine" evidence="2">
    <location>
        <position position="120"/>
    </location>
</feature>
<sequence>MGPAMDEVTFKSDTVLSDVHLYTPNQRHLMVRLNGMGQPVFLSQFKLLWSRDSWTDSGAEDSGPTDVSTEEMPPAGSGSGHSHEDLSLQAGDDNTIQEGLSVPLDEDGDLDVVRRPRAASDPNPAEPARDKVHPTILAQEEDDLVGDQEYESCPHSIIKIEHTMATPLEDVGKQVWRGALLLADYILFRRDLFQGCTVLELGAGTGLASIVAATMAHTVYCTDVGTDLLAMCQRNVALNSHLTATGGGVVKVKELDWLKDNLCTDPKAPFSWSEEEIADLYDHTTVLLAAEVFYDDDLTNALFNTLSRLVHRLKNACTAIFSVEKRFNFTLRHLDVTCEAYDHFRASLDSLEKLADGRLRFMVEPVEASFPQLLVYERIRQLELWKIVVEPAA</sequence>
<dbReference type="EC" id="2.1.1.-" evidence="2"/>
<dbReference type="EMBL" id="AK136614">
    <property type="protein sequence ID" value="BAE23071.1"/>
    <property type="status" value="ALT_FRAME"/>
    <property type="molecule type" value="mRNA"/>
</dbReference>
<dbReference type="EMBL" id="BC024814">
    <property type="protein sequence ID" value="AAH24814.1"/>
    <property type="molecule type" value="mRNA"/>
</dbReference>
<dbReference type="CCDS" id="CCDS27938.1"/>
<dbReference type="RefSeq" id="NP_666359.1">
    <property type="nucleotide sequence ID" value="NM_146247.2"/>
</dbReference>
<dbReference type="SMR" id="Q8R1C6"/>
<dbReference type="FunCoup" id="Q8R1C6">
    <property type="interactions" value="1536"/>
</dbReference>
<dbReference type="STRING" id="10090.ENSMUSP00000044108"/>
<dbReference type="iPTMnet" id="Q8R1C6"/>
<dbReference type="PhosphoSitePlus" id="Q8R1C6"/>
<dbReference type="PaxDb" id="10090-ENSMUSP00000044108"/>
<dbReference type="ProteomicsDB" id="252539"/>
<dbReference type="Antibodypedia" id="51872">
    <property type="antibodies" value="28 antibodies from 11 providers"/>
</dbReference>
<dbReference type="DNASU" id="239706"/>
<dbReference type="Ensembl" id="ENSMUST00000046470.16">
    <property type="protein sequence ID" value="ENSMUSP00000044108.10"/>
    <property type="gene ID" value="ENSMUSG00000039345.17"/>
</dbReference>
<dbReference type="GeneID" id="239706"/>
<dbReference type="KEGG" id="mmu:239706"/>
<dbReference type="UCSC" id="uc007ycl.1">
    <property type="organism name" value="mouse"/>
</dbReference>
<dbReference type="AGR" id="MGI:2384301"/>
<dbReference type="CTD" id="79091"/>
<dbReference type="MGI" id="MGI:2384301">
    <property type="gene designation" value="Mettl22"/>
</dbReference>
<dbReference type="VEuPathDB" id="HostDB:ENSMUSG00000039345"/>
<dbReference type="eggNOG" id="KOG2793">
    <property type="taxonomic scope" value="Eukaryota"/>
</dbReference>
<dbReference type="GeneTree" id="ENSGT00510000048539"/>
<dbReference type="HOGENOM" id="CLU_048361_0_0_1"/>
<dbReference type="InParanoid" id="Q8R1C6"/>
<dbReference type="OMA" id="AYERIQQ"/>
<dbReference type="OrthoDB" id="46564at2759"/>
<dbReference type="PhylomeDB" id="Q8R1C6"/>
<dbReference type="TreeFam" id="TF324844"/>
<dbReference type="Reactome" id="R-MMU-8876725">
    <property type="pathway name" value="Protein methylation"/>
</dbReference>
<dbReference type="BioGRID-ORCS" id="239706">
    <property type="hits" value="3 hits in 78 CRISPR screens"/>
</dbReference>
<dbReference type="PRO" id="PR:Q8R1C6"/>
<dbReference type="Proteomes" id="UP000000589">
    <property type="component" value="Chromosome 16"/>
</dbReference>
<dbReference type="RNAct" id="Q8R1C6">
    <property type="molecule type" value="protein"/>
</dbReference>
<dbReference type="Bgee" id="ENSMUSG00000039345">
    <property type="expression patterns" value="Expressed in interventricular septum and 267 other cell types or tissues"/>
</dbReference>
<dbReference type="ExpressionAtlas" id="Q8R1C6">
    <property type="expression patterns" value="baseline and differential"/>
</dbReference>
<dbReference type="GO" id="GO:0005730">
    <property type="term" value="C:nucleolus"/>
    <property type="evidence" value="ECO:0007669"/>
    <property type="project" value="Ensembl"/>
</dbReference>
<dbReference type="GO" id="GO:0005654">
    <property type="term" value="C:nucleoplasm"/>
    <property type="evidence" value="ECO:0007669"/>
    <property type="project" value="Ensembl"/>
</dbReference>
<dbReference type="GO" id="GO:0032991">
    <property type="term" value="C:protein-containing complex"/>
    <property type="evidence" value="ECO:0007669"/>
    <property type="project" value="Ensembl"/>
</dbReference>
<dbReference type="GO" id="GO:0031072">
    <property type="term" value="F:heat shock protein binding"/>
    <property type="evidence" value="ECO:0007669"/>
    <property type="project" value="Ensembl"/>
</dbReference>
<dbReference type="GO" id="GO:0016279">
    <property type="term" value="F:protein-lysine N-methyltransferase activity"/>
    <property type="evidence" value="ECO:0007669"/>
    <property type="project" value="RHEA"/>
</dbReference>
<dbReference type="GO" id="GO:0032259">
    <property type="term" value="P:methylation"/>
    <property type="evidence" value="ECO:0007669"/>
    <property type="project" value="UniProtKB-KW"/>
</dbReference>
<dbReference type="CDD" id="cd02440">
    <property type="entry name" value="AdoMet_MTases"/>
    <property type="match status" value="1"/>
</dbReference>
<dbReference type="FunFam" id="3.40.50.150:FF:000156">
    <property type="entry name" value="Methyltransferase like 22"/>
    <property type="match status" value="1"/>
</dbReference>
<dbReference type="Gene3D" id="3.40.50.150">
    <property type="entry name" value="Vaccinia Virus protein VP39"/>
    <property type="match status" value="1"/>
</dbReference>
<dbReference type="InterPro" id="IPR019410">
    <property type="entry name" value="Methyltransf_16"/>
</dbReference>
<dbReference type="InterPro" id="IPR038899">
    <property type="entry name" value="METTL22"/>
</dbReference>
<dbReference type="InterPro" id="IPR029063">
    <property type="entry name" value="SAM-dependent_MTases_sf"/>
</dbReference>
<dbReference type="PANTHER" id="PTHR23108:SF0">
    <property type="entry name" value="METHYLTRANSFERASE-LIKE PROTEIN 22"/>
    <property type="match status" value="1"/>
</dbReference>
<dbReference type="PANTHER" id="PTHR23108">
    <property type="entry name" value="METHYLTRANSFERASE-RELATED"/>
    <property type="match status" value="1"/>
</dbReference>
<dbReference type="Pfam" id="PF10294">
    <property type="entry name" value="Methyltransf_16"/>
    <property type="match status" value="1"/>
</dbReference>
<dbReference type="SUPFAM" id="SSF53335">
    <property type="entry name" value="S-adenosyl-L-methionine-dependent methyltransferases"/>
    <property type="match status" value="1"/>
</dbReference>